<accession>Q1JLN1</accession>
<organism>
    <name type="scientific">Streptococcus pyogenes serotype M12 (strain MGAS9429)</name>
    <dbReference type="NCBI Taxonomy" id="370551"/>
    <lineage>
        <taxon>Bacteria</taxon>
        <taxon>Bacillati</taxon>
        <taxon>Bacillota</taxon>
        <taxon>Bacilli</taxon>
        <taxon>Lactobacillales</taxon>
        <taxon>Streptococcaceae</taxon>
        <taxon>Streptococcus</taxon>
    </lineage>
</organism>
<name>RNH2_STRPC</name>
<comment type="function">
    <text evidence="1">Endonuclease that specifically degrades the RNA of RNA-DNA hybrids.</text>
</comment>
<comment type="catalytic activity">
    <reaction evidence="1">
        <text>Endonucleolytic cleavage to 5'-phosphomonoester.</text>
        <dbReference type="EC" id="3.1.26.4"/>
    </reaction>
</comment>
<comment type="cofactor">
    <cofactor evidence="1">
        <name>Mn(2+)</name>
        <dbReference type="ChEBI" id="CHEBI:29035"/>
    </cofactor>
    <cofactor evidence="1">
        <name>Mg(2+)</name>
        <dbReference type="ChEBI" id="CHEBI:18420"/>
    </cofactor>
    <text evidence="1">Manganese or magnesium. Binds 1 divalent metal ion per monomer in the absence of substrate. May bind a second metal ion after substrate binding.</text>
</comment>
<comment type="subcellular location">
    <subcellularLocation>
        <location evidence="1">Cytoplasm</location>
    </subcellularLocation>
</comment>
<comment type="similarity">
    <text evidence="1">Belongs to the RNase HII family.</text>
</comment>
<keyword id="KW-0963">Cytoplasm</keyword>
<keyword id="KW-0255">Endonuclease</keyword>
<keyword id="KW-0378">Hydrolase</keyword>
<keyword id="KW-0464">Manganese</keyword>
<keyword id="KW-0479">Metal-binding</keyword>
<keyword id="KW-0540">Nuclease</keyword>
<evidence type="ECO:0000255" key="1">
    <source>
        <dbReference type="HAMAP-Rule" id="MF_00052"/>
    </source>
</evidence>
<evidence type="ECO:0000255" key="2">
    <source>
        <dbReference type="PROSITE-ProRule" id="PRU01319"/>
    </source>
</evidence>
<dbReference type="EC" id="3.1.26.4" evidence="1"/>
<dbReference type="EMBL" id="CP000259">
    <property type="protein sequence ID" value="ABF32188.1"/>
    <property type="molecule type" value="Genomic_DNA"/>
</dbReference>
<dbReference type="RefSeq" id="WP_002989771.1">
    <property type="nucleotide sequence ID" value="NC_008021.1"/>
</dbReference>
<dbReference type="SMR" id="Q1JLN1"/>
<dbReference type="KEGG" id="spk:MGAS9429_Spy1001"/>
<dbReference type="HOGENOM" id="CLU_036532_2_1_9"/>
<dbReference type="Proteomes" id="UP000002433">
    <property type="component" value="Chromosome"/>
</dbReference>
<dbReference type="GO" id="GO:0005737">
    <property type="term" value="C:cytoplasm"/>
    <property type="evidence" value="ECO:0007669"/>
    <property type="project" value="UniProtKB-SubCell"/>
</dbReference>
<dbReference type="GO" id="GO:0032299">
    <property type="term" value="C:ribonuclease H2 complex"/>
    <property type="evidence" value="ECO:0007669"/>
    <property type="project" value="TreeGrafter"/>
</dbReference>
<dbReference type="GO" id="GO:0030145">
    <property type="term" value="F:manganese ion binding"/>
    <property type="evidence" value="ECO:0007669"/>
    <property type="project" value="UniProtKB-UniRule"/>
</dbReference>
<dbReference type="GO" id="GO:0003723">
    <property type="term" value="F:RNA binding"/>
    <property type="evidence" value="ECO:0007669"/>
    <property type="project" value="InterPro"/>
</dbReference>
<dbReference type="GO" id="GO:0004523">
    <property type="term" value="F:RNA-DNA hybrid ribonuclease activity"/>
    <property type="evidence" value="ECO:0007669"/>
    <property type="project" value="UniProtKB-UniRule"/>
</dbReference>
<dbReference type="GO" id="GO:0043137">
    <property type="term" value="P:DNA replication, removal of RNA primer"/>
    <property type="evidence" value="ECO:0007669"/>
    <property type="project" value="TreeGrafter"/>
</dbReference>
<dbReference type="GO" id="GO:0006298">
    <property type="term" value="P:mismatch repair"/>
    <property type="evidence" value="ECO:0007669"/>
    <property type="project" value="TreeGrafter"/>
</dbReference>
<dbReference type="CDD" id="cd07182">
    <property type="entry name" value="RNase_HII_bacteria_HII_like"/>
    <property type="match status" value="1"/>
</dbReference>
<dbReference type="FunFam" id="3.30.420.10:FF:000006">
    <property type="entry name" value="Ribonuclease HII"/>
    <property type="match status" value="1"/>
</dbReference>
<dbReference type="Gene3D" id="3.30.420.10">
    <property type="entry name" value="Ribonuclease H-like superfamily/Ribonuclease H"/>
    <property type="match status" value="1"/>
</dbReference>
<dbReference type="HAMAP" id="MF_00052_B">
    <property type="entry name" value="RNase_HII_B"/>
    <property type="match status" value="1"/>
</dbReference>
<dbReference type="InterPro" id="IPR022898">
    <property type="entry name" value="RNase_HII"/>
</dbReference>
<dbReference type="InterPro" id="IPR001352">
    <property type="entry name" value="RNase_HII/HIII"/>
</dbReference>
<dbReference type="InterPro" id="IPR024567">
    <property type="entry name" value="RNase_HII/HIII_dom"/>
</dbReference>
<dbReference type="InterPro" id="IPR012337">
    <property type="entry name" value="RNaseH-like_sf"/>
</dbReference>
<dbReference type="InterPro" id="IPR036397">
    <property type="entry name" value="RNaseH_sf"/>
</dbReference>
<dbReference type="NCBIfam" id="NF000594">
    <property type="entry name" value="PRK00015.1-1"/>
    <property type="match status" value="1"/>
</dbReference>
<dbReference type="NCBIfam" id="NF000595">
    <property type="entry name" value="PRK00015.1-3"/>
    <property type="match status" value="1"/>
</dbReference>
<dbReference type="PANTHER" id="PTHR10954">
    <property type="entry name" value="RIBONUCLEASE H2 SUBUNIT A"/>
    <property type="match status" value="1"/>
</dbReference>
<dbReference type="PANTHER" id="PTHR10954:SF18">
    <property type="entry name" value="RIBONUCLEASE HII"/>
    <property type="match status" value="1"/>
</dbReference>
<dbReference type="Pfam" id="PF01351">
    <property type="entry name" value="RNase_HII"/>
    <property type="match status" value="1"/>
</dbReference>
<dbReference type="SUPFAM" id="SSF53098">
    <property type="entry name" value="Ribonuclease H-like"/>
    <property type="match status" value="1"/>
</dbReference>
<dbReference type="PROSITE" id="PS51975">
    <property type="entry name" value="RNASE_H_2"/>
    <property type="match status" value="1"/>
</dbReference>
<feature type="chain" id="PRO_1000031212" description="Ribonuclease HII">
    <location>
        <begin position="1"/>
        <end position="263"/>
    </location>
</feature>
<feature type="domain" description="RNase H type-2" evidence="2">
    <location>
        <begin position="71"/>
        <end position="262"/>
    </location>
</feature>
<feature type="binding site" evidence="1">
    <location>
        <position position="77"/>
    </location>
    <ligand>
        <name>a divalent metal cation</name>
        <dbReference type="ChEBI" id="CHEBI:60240"/>
    </ligand>
</feature>
<feature type="binding site" evidence="1">
    <location>
        <position position="78"/>
    </location>
    <ligand>
        <name>a divalent metal cation</name>
        <dbReference type="ChEBI" id="CHEBI:60240"/>
    </ligand>
</feature>
<feature type="binding site" evidence="1">
    <location>
        <position position="172"/>
    </location>
    <ligand>
        <name>a divalent metal cation</name>
        <dbReference type="ChEBI" id="CHEBI:60240"/>
    </ligand>
</feature>
<gene>
    <name evidence="1" type="primary">rnhB</name>
    <name type="ordered locus">MGAS9429_Spy1001</name>
</gene>
<reference key="1">
    <citation type="journal article" date="2006" name="Proc. Natl. Acad. Sci. U.S.A.">
        <title>Molecular genetic anatomy of inter- and intraserotype variation in the human bacterial pathogen group A Streptococcus.</title>
        <authorList>
            <person name="Beres S.B."/>
            <person name="Richter E.W."/>
            <person name="Nagiec M.J."/>
            <person name="Sumby P."/>
            <person name="Porcella S.F."/>
            <person name="DeLeo F.R."/>
            <person name="Musser J.M."/>
        </authorList>
    </citation>
    <scope>NUCLEOTIDE SEQUENCE [LARGE SCALE GENOMIC DNA]</scope>
    <source>
        <strain>MGAS9429</strain>
    </source>
</reference>
<proteinExistence type="inferred from homology"/>
<sequence length="263" mass="28712">MSTSIKAIKESLEAVTSLLDPLFQELATDTRSGVQKALKSRQKAIQAELAEEERLEAMLSYEKALYKKGYQAIAGIDEVGRGPLAGPVVAACVILPKYCKIKGLNDSKKIPKSKHETIYQAVKEKALAIGIGIIDNQLIDEVNIYEATKLAMLEAIKQLESQLTQPDYLLIDAMTLDIAISQQSILKGDANSLSIAAASIVAKVTRDQMMANYDRIFPGYGFAKNAGYGTKEHLQGLKAYGITPIHRKSFEPVKSMCCDSTNP</sequence>
<protein>
    <recommendedName>
        <fullName evidence="1">Ribonuclease HII</fullName>
        <shortName evidence="1">RNase HII</shortName>
        <ecNumber evidence="1">3.1.26.4</ecNumber>
    </recommendedName>
</protein>